<evidence type="ECO:0000250" key="1">
    <source>
        <dbReference type="UniProtKB" id="A0A1L4BKQ4"/>
    </source>
</evidence>
<evidence type="ECO:0000250" key="2">
    <source>
        <dbReference type="UniProtKB" id="P26744"/>
    </source>
</evidence>
<evidence type="ECO:0000256" key="3">
    <source>
        <dbReference type="SAM" id="MobiDB-lite"/>
    </source>
</evidence>
<evidence type="ECO:0000303" key="4">
    <source>
    </source>
</evidence>
<evidence type="ECO:0000303" key="5">
    <source>
    </source>
</evidence>
<evidence type="ECO:0000305" key="6"/>
<dbReference type="EMBL" id="EU100883">
    <property type="protein sequence ID" value="ABU96919.1"/>
    <property type="molecule type" value="Genomic_DNA"/>
</dbReference>
<dbReference type="RefSeq" id="YP_001467939.1">
    <property type="nucleotide sequence ID" value="NC_009803.1"/>
</dbReference>
<dbReference type="PDB" id="6QJT">
    <property type="method" value="EM"/>
    <property type="resolution" value="3.74 A"/>
    <property type="chains" value="A=1-448"/>
</dbReference>
<dbReference type="PDBsum" id="6QJT"/>
<dbReference type="EMDB" id="EMD-4567"/>
<dbReference type="SMR" id="A7XXB9"/>
<dbReference type="GeneID" id="5600471"/>
<dbReference type="KEGG" id="vg:5600471"/>
<dbReference type="Proteomes" id="UP000001132">
    <property type="component" value="Genome"/>
</dbReference>
<dbReference type="GO" id="GO:0019028">
    <property type="term" value="C:viral capsid"/>
    <property type="evidence" value="ECO:0007669"/>
    <property type="project" value="UniProtKB-KW"/>
</dbReference>
<dbReference type="InterPro" id="IPR054117">
    <property type="entry name" value="P23-45_portal"/>
</dbReference>
<dbReference type="Pfam" id="PF21919">
    <property type="entry name" value="P23-45_portal_barrel"/>
    <property type="match status" value="1"/>
</dbReference>
<name>PORTL_BP234</name>
<proteinExistence type="evidence at protein level"/>
<protein>
    <recommendedName>
        <fullName evidence="5">Portal protein</fullName>
    </recommendedName>
    <alternativeName>
        <fullName evidence="6">Gene product 86</fullName>
        <shortName evidence="6">gp86</shortName>
    </alternativeName>
</protein>
<organismHost>
    <name type="scientific">Thermus thermophilus</name>
    <dbReference type="NCBI Taxonomy" id="274"/>
</organismHost>
<feature type="chain" id="PRO_0000447192" description="Portal protein">
    <location>
        <begin position="1"/>
        <end position="448"/>
    </location>
</feature>
<feature type="region of interest" description="Disordered" evidence="3">
    <location>
        <begin position="1"/>
        <end position="25"/>
    </location>
</feature>
<gene>
    <name evidence="4" type="ORF">P23p86</name>
</gene>
<sequence>MAKRGRKPKELVPGPGSIDPSDVPKLEGASVPVMSTSYDVVVDREFDELLQGKDGLLVYHKMLSDGTVKNALNYIFGRIRSAKWYVEPASTDPEDIAIAAFIHAQLGIDDASVGKYPFGRLFAIYENAYIYGMAAGEIVLTLGADGKLILDKIVPIHPFNIDEVLYDEEGGPKALKLSGEVKGGSQFVNGLEIPIWKTVVFLHNDDGSFTGQSALRAAVPHWLAKRALILLINHGLERFMIGVPTLTIPKSVRQGTKQWEAAKEIVKNFVQKPRHGIILPDDWKFDTVDLKSAMPDAIPYLTYHDAGIARALGIDFNTVQLNMGVQAVNIGEFVSLTQQTIISLQREFASAVNLYLIPKLVLPNWPGATRFPRLTFEMEERNDFSAAANLMGMLINAVKDSEDIPTELKALIDALPSKMRRALGVVDEVREAVRQPADSRYLYTRRRR</sequence>
<reference key="1">
    <citation type="journal article" date="2008" name="J. Mol. Biol.">
        <title>Genome comparison and proteomic characterization of Thermus thermophilus bacteriophages P23-45 and P74-26: siphoviruses with triplex-forming sequences and the longest known tails.</title>
        <authorList>
            <person name="Minakhin L."/>
            <person name="Goel M."/>
            <person name="Berdygulova Z."/>
            <person name="Ramanculov E."/>
            <person name="Florens L."/>
            <person name="Glazko G."/>
            <person name="Karamychev V.N."/>
            <person name="Slesarev A.I."/>
            <person name="Kozyavkin S.A."/>
            <person name="Khromov I."/>
            <person name="Ackermann H.W."/>
            <person name="Washburn M."/>
            <person name="Mushegian A."/>
            <person name="Severinov K."/>
        </authorList>
    </citation>
    <scope>NUCLEOTIDE SEQUENCE [GENOMIC DNA]</scope>
</reference>
<reference key="2">
    <citation type="journal article" date="2019" name="Proc. Natl. Acad. Sci. U.S.A.">
        <title>Cryo-EM structure and in vitro DNA packaging of a thermophilic virus with supersized T=7 capsids.</title>
        <authorList>
            <person name="Bayfield O.W."/>
            <person name="Klimuk E."/>
            <person name="Winkler D.C."/>
            <person name="Hesketh E.L."/>
            <person name="Chechik M."/>
            <person name="Cheng N."/>
            <person name="Dykeman E.C."/>
            <person name="Minakhin L."/>
            <person name="Ranson N.A."/>
            <person name="Severinov K."/>
            <person name="Steven A.C."/>
            <person name="Antson A.A."/>
        </authorList>
    </citation>
    <scope>IDENTIFICATION</scope>
</reference>
<accession>A7XXB9</accession>
<comment type="function">
    <text evidence="1">Forms the portal vertex of the capsid (By similarity). This portal plays critical roles in head assembly, genome packaging, neck/tail attachment, and genome ejection (By similarity). The portal protein multimerizes as a single ring-shaped homododecamer arranged around a central channel (By similarity). Forms the portal vertex of the capsid. This portal plays critical roles in head assembly, genome packaging, neck/tail attachment, and genome ejection (By similarity).</text>
</comment>
<comment type="subunit">
    <text evidence="1 2">Homododecamer (By similarity). Interacts with the capsid protein (By similarity). Interacts with the terminase large subunit; this interaction allows the packaging of viral DNA (By similarity).</text>
</comment>
<comment type="subcellular location">
    <subcellularLocation>
        <location evidence="1">Virion</location>
    </subcellularLocation>
    <text evidence="1">Located at a unique vertex of the capsid.</text>
</comment>
<comment type="similarity">
    <text evidence="6">Belongs to the P23virus portal protein family.</text>
</comment>
<organism>
    <name type="scientific">Thermus virus P23-45</name>
    <name type="common">Thermus thermophilus phage P23-45</name>
    <dbReference type="NCBI Taxonomy" id="2914006"/>
    <lineage>
        <taxon>Viruses</taxon>
        <taxon>Duplodnaviria</taxon>
        <taxon>Heunggongvirae</taxon>
        <taxon>Uroviricota</taxon>
        <taxon>Caudoviricetes</taxon>
        <taxon>Oshimavirus</taxon>
        <taxon>Oshimavirus P2345</taxon>
    </lineage>
</organism>
<keyword id="KW-0002">3D-structure</keyword>
<keyword id="KW-0167">Capsid protein</keyword>
<keyword id="KW-1185">Reference proteome</keyword>
<keyword id="KW-0118">Viral capsid assembly</keyword>
<keyword id="KW-0231">Viral genome packaging</keyword>
<keyword id="KW-1188">Viral release from host cell</keyword>
<keyword id="KW-0946">Virion</keyword>